<gene>
    <name evidence="1" type="primary">rpl24e</name>
    <name type="ordered locus">Msm_0204</name>
</gene>
<sequence>MRTCSFCNKEIEEGTGKMYVKKDGSIYFFCSSKCEKNMIKLGRVPRKVKWVKE</sequence>
<accession>A5UJN1</accession>
<keyword id="KW-0479">Metal-binding</keyword>
<keyword id="KW-0687">Ribonucleoprotein</keyword>
<keyword id="KW-0689">Ribosomal protein</keyword>
<keyword id="KW-0694">RNA-binding</keyword>
<keyword id="KW-0699">rRNA-binding</keyword>
<keyword id="KW-0862">Zinc</keyword>
<keyword id="KW-0863">Zinc-finger</keyword>
<reference key="1">
    <citation type="journal article" date="2007" name="Proc. Natl. Acad. Sci. U.S.A.">
        <title>Genomic and metabolic adaptations of Methanobrevibacter smithii to the human gut.</title>
        <authorList>
            <person name="Samuel B.S."/>
            <person name="Hansen E.E."/>
            <person name="Manchester J.K."/>
            <person name="Coutinho P.M."/>
            <person name="Henrissat B."/>
            <person name="Fulton R."/>
            <person name="Latreille P."/>
            <person name="Kim K."/>
            <person name="Wilson R.K."/>
            <person name="Gordon J.I."/>
        </authorList>
    </citation>
    <scope>NUCLEOTIDE SEQUENCE [LARGE SCALE GENOMIC DNA]</scope>
    <source>
        <strain>ATCC 35061 / DSM 861 / OCM 144 / PS</strain>
    </source>
</reference>
<protein>
    <recommendedName>
        <fullName evidence="1">Large ribosomal subunit protein eL24</fullName>
    </recommendedName>
    <alternativeName>
        <fullName evidence="2">50S ribosomal protein L24e</fullName>
    </alternativeName>
</protein>
<comment type="function">
    <text evidence="1">Binds to the 23S rRNA.</text>
</comment>
<comment type="cofactor">
    <cofactor evidence="1">
        <name>Zn(2+)</name>
        <dbReference type="ChEBI" id="CHEBI:29105"/>
    </cofactor>
    <text evidence="1">Binds 1 zinc ion per subunit.</text>
</comment>
<comment type="subunit">
    <text evidence="1">Part of the 50S ribosomal subunit. Forms a cluster with proteins L3 and L14.</text>
</comment>
<comment type="similarity">
    <text evidence="1">Belongs to the eukaryotic ribosomal protein eL24 family.</text>
</comment>
<evidence type="ECO:0000255" key="1">
    <source>
        <dbReference type="HAMAP-Rule" id="MF_00773"/>
    </source>
</evidence>
<evidence type="ECO:0000305" key="2"/>
<name>RL24E_METS3</name>
<dbReference type="EMBL" id="CP000678">
    <property type="protein sequence ID" value="ABQ86409.1"/>
    <property type="molecule type" value="Genomic_DNA"/>
</dbReference>
<dbReference type="RefSeq" id="WP_004034240.1">
    <property type="nucleotide sequence ID" value="NZ_CP117965.1"/>
</dbReference>
<dbReference type="SMR" id="A5UJN1"/>
<dbReference type="STRING" id="420247.Msm_0204"/>
<dbReference type="EnsemblBacteria" id="ABQ86409">
    <property type="protein sequence ID" value="ABQ86409"/>
    <property type="gene ID" value="Msm_0204"/>
</dbReference>
<dbReference type="KEGG" id="msi:Msm_0204"/>
<dbReference type="PATRIC" id="fig|420247.28.peg.208"/>
<dbReference type="eggNOG" id="arCOG01950">
    <property type="taxonomic scope" value="Archaea"/>
</dbReference>
<dbReference type="HOGENOM" id="CLU_190191_0_0_2"/>
<dbReference type="Proteomes" id="UP000001992">
    <property type="component" value="Chromosome"/>
</dbReference>
<dbReference type="GO" id="GO:1990904">
    <property type="term" value="C:ribonucleoprotein complex"/>
    <property type="evidence" value="ECO:0007669"/>
    <property type="project" value="UniProtKB-KW"/>
</dbReference>
<dbReference type="GO" id="GO:0005840">
    <property type="term" value="C:ribosome"/>
    <property type="evidence" value="ECO:0007669"/>
    <property type="project" value="UniProtKB-KW"/>
</dbReference>
<dbReference type="GO" id="GO:0019843">
    <property type="term" value="F:rRNA binding"/>
    <property type="evidence" value="ECO:0007669"/>
    <property type="project" value="UniProtKB-UniRule"/>
</dbReference>
<dbReference type="GO" id="GO:0003735">
    <property type="term" value="F:structural constituent of ribosome"/>
    <property type="evidence" value="ECO:0007669"/>
    <property type="project" value="InterPro"/>
</dbReference>
<dbReference type="GO" id="GO:0008270">
    <property type="term" value="F:zinc ion binding"/>
    <property type="evidence" value="ECO:0007669"/>
    <property type="project" value="UniProtKB-UniRule"/>
</dbReference>
<dbReference type="GO" id="GO:0006412">
    <property type="term" value="P:translation"/>
    <property type="evidence" value="ECO:0007669"/>
    <property type="project" value="UniProtKB-UniRule"/>
</dbReference>
<dbReference type="CDD" id="cd00472">
    <property type="entry name" value="Ribosomal_L24e_L24"/>
    <property type="match status" value="1"/>
</dbReference>
<dbReference type="Gene3D" id="2.30.170.20">
    <property type="entry name" value="Ribosomal protein L24e"/>
    <property type="match status" value="1"/>
</dbReference>
<dbReference type="HAMAP" id="MF_00773">
    <property type="entry name" value="Ribosomal_eL24"/>
    <property type="match status" value="1"/>
</dbReference>
<dbReference type="InterPro" id="IPR038630">
    <property type="entry name" value="L24e/L24_sf"/>
</dbReference>
<dbReference type="InterPro" id="IPR055345">
    <property type="entry name" value="Ribosomal_eL24-rel_arc"/>
</dbReference>
<dbReference type="InterPro" id="IPR000988">
    <property type="entry name" value="Ribosomal_eL24-rel_N"/>
</dbReference>
<dbReference type="InterPro" id="IPR011017">
    <property type="entry name" value="TRASH_dom"/>
</dbReference>
<dbReference type="NCBIfam" id="NF034186">
    <property type="entry name" value="PRK14891.1-1"/>
    <property type="match status" value="1"/>
</dbReference>
<dbReference type="Pfam" id="PF01246">
    <property type="entry name" value="Ribosomal_L24e"/>
    <property type="match status" value="1"/>
</dbReference>
<dbReference type="SMART" id="SM00746">
    <property type="entry name" value="TRASH"/>
    <property type="match status" value="1"/>
</dbReference>
<dbReference type="SUPFAM" id="SSF57716">
    <property type="entry name" value="Glucocorticoid receptor-like (DNA-binding domain)"/>
    <property type="match status" value="1"/>
</dbReference>
<proteinExistence type="inferred from homology"/>
<organism>
    <name type="scientific">Methanobrevibacter smithii (strain ATCC 35061 / DSM 861 / OCM 144 / PS)</name>
    <dbReference type="NCBI Taxonomy" id="420247"/>
    <lineage>
        <taxon>Archaea</taxon>
        <taxon>Methanobacteriati</taxon>
        <taxon>Methanobacteriota</taxon>
        <taxon>Methanomada group</taxon>
        <taxon>Methanobacteria</taxon>
        <taxon>Methanobacteriales</taxon>
        <taxon>Methanobacteriaceae</taxon>
        <taxon>Methanobrevibacter</taxon>
    </lineage>
</organism>
<feature type="chain" id="PRO_1000148454" description="Large ribosomal subunit protein eL24">
    <location>
        <begin position="1"/>
        <end position="53"/>
    </location>
</feature>
<feature type="zinc finger region" description="C4-type" evidence="1">
    <location>
        <begin position="4"/>
        <end position="34"/>
    </location>
</feature>
<feature type="binding site" evidence="1">
    <location>
        <position position="4"/>
    </location>
    <ligand>
        <name>Zn(2+)</name>
        <dbReference type="ChEBI" id="CHEBI:29105"/>
    </ligand>
</feature>
<feature type="binding site" evidence="1">
    <location>
        <position position="7"/>
    </location>
    <ligand>
        <name>Zn(2+)</name>
        <dbReference type="ChEBI" id="CHEBI:29105"/>
    </ligand>
</feature>
<feature type="binding site" evidence="1">
    <location>
        <position position="30"/>
    </location>
    <ligand>
        <name>Zn(2+)</name>
        <dbReference type="ChEBI" id="CHEBI:29105"/>
    </ligand>
</feature>
<feature type="binding site" evidence="1">
    <location>
        <position position="34"/>
    </location>
    <ligand>
        <name>Zn(2+)</name>
        <dbReference type="ChEBI" id="CHEBI:29105"/>
    </ligand>
</feature>